<reference key="1">
    <citation type="journal article" date="1996" name="Science">
        <title>Complete genome sequence of the methanogenic archaeon, Methanococcus jannaschii.</title>
        <authorList>
            <person name="Bult C.J."/>
            <person name="White O."/>
            <person name="Olsen G.J."/>
            <person name="Zhou L."/>
            <person name="Fleischmann R.D."/>
            <person name="Sutton G.G."/>
            <person name="Blake J.A."/>
            <person name="FitzGerald L.M."/>
            <person name="Clayton R.A."/>
            <person name="Gocayne J.D."/>
            <person name="Kerlavage A.R."/>
            <person name="Dougherty B.A."/>
            <person name="Tomb J.-F."/>
            <person name="Adams M.D."/>
            <person name="Reich C.I."/>
            <person name="Overbeek R."/>
            <person name="Kirkness E.F."/>
            <person name="Weinstock K.G."/>
            <person name="Merrick J.M."/>
            <person name="Glodek A."/>
            <person name="Scott J.L."/>
            <person name="Geoghagen N.S.M."/>
            <person name="Weidman J.F."/>
            <person name="Fuhrmann J.L."/>
            <person name="Nguyen D."/>
            <person name="Utterback T.R."/>
            <person name="Kelley J.M."/>
            <person name="Peterson J.D."/>
            <person name="Sadow P.W."/>
            <person name="Hanna M.C."/>
            <person name="Cotton M.D."/>
            <person name="Roberts K.M."/>
            <person name="Hurst M.A."/>
            <person name="Kaine B.P."/>
            <person name="Borodovsky M."/>
            <person name="Klenk H.-P."/>
            <person name="Fraser C.M."/>
            <person name="Smith H.O."/>
            <person name="Woese C.R."/>
            <person name="Venter J.C."/>
        </authorList>
    </citation>
    <scope>NUCLEOTIDE SEQUENCE [LARGE SCALE GENOMIC DNA]</scope>
    <source>
        <strain>ATCC 43067 / DSM 2661 / JAL-1 / JCM 10045 / NBRC 100440</strain>
    </source>
</reference>
<sequence length="96" mass="10927">MNKEKYGDNMMTDSDSKQAIFIIGVQGKEIKNVEQLMQELSKIVNEGSIYRYSKETGLGKGTLHKIKNNELQDPRISTVLKLLKASGKRLVIIDEW</sequence>
<protein>
    <recommendedName>
        <fullName>Uncharacterized protein MJ0333</fullName>
    </recommendedName>
</protein>
<accession>Q57779</accession>
<dbReference type="EMBL" id="L77117">
    <property type="protein sequence ID" value="AAB98321.1"/>
    <property type="molecule type" value="Genomic_DNA"/>
</dbReference>
<dbReference type="PIR" id="E64341">
    <property type="entry name" value="E64341"/>
</dbReference>
<dbReference type="SMR" id="Q57779"/>
<dbReference type="FunCoup" id="Q57779">
    <property type="interactions" value="7"/>
</dbReference>
<dbReference type="STRING" id="243232.MJ_0333"/>
<dbReference type="PaxDb" id="243232-MJ_0333"/>
<dbReference type="EnsemblBacteria" id="AAB98321">
    <property type="protein sequence ID" value="AAB98321"/>
    <property type="gene ID" value="MJ_0333"/>
</dbReference>
<dbReference type="KEGG" id="mja:MJ_0333"/>
<dbReference type="eggNOG" id="arCOG09640">
    <property type="taxonomic scope" value="Archaea"/>
</dbReference>
<dbReference type="HOGENOM" id="CLU_2353231_0_0_2"/>
<dbReference type="InParanoid" id="Q57779"/>
<dbReference type="Proteomes" id="UP000000805">
    <property type="component" value="Chromosome"/>
</dbReference>
<feature type="chain" id="PRO_0000106803" description="Uncharacterized protein MJ0333">
    <location>
        <begin position="1"/>
        <end position="96"/>
    </location>
</feature>
<gene>
    <name type="ordered locus">MJ0333</name>
</gene>
<proteinExistence type="predicted"/>
<organism>
    <name type="scientific">Methanocaldococcus jannaschii (strain ATCC 43067 / DSM 2661 / JAL-1 / JCM 10045 / NBRC 100440)</name>
    <name type="common">Methanococcus jannaschii</name>
    <dbReference type="NCBI Taxonomy" id="243232"/>
    <lineage>
        <taxon>Archaea</taxon>
        <taxon>Methanobacteriati</taxon>
        <taxon>Methanobacteriota</taxon>
        <taxon>Methanomada group</taxon>
        <taxon>Methanococci</taxon>
        <taxon>Methanococcales</taxon>
        <taxon>Methanocaldococcaceae</taxon>
        <taxon>Methanocaldococcus</taxon>
    </lineage>
</organism>
<keyword id="KW-1185">Reference proteome</keyword>
<name>Y333_METJA</name>